<proteinExistence type="inferred from homology"/>
<organism>
    <name type="scientific">Shigella boydii serotype 18 (strain CDC 3083-94 / BS512)</name>
    <dbReference type="NCBI Taxonomy" id="344609"/>
    <lineage>
        <taxon>Bacteria</taxon>
        <taxon>Pseudomonadati</taxon>
        <taxon>Pseudomonadota</taxon>
        <taxon>Gammaproteobacteria</taxon>
        <taxon>Enterobacterales</taxon>
        <taxon>Enterobacteriaceae</taxon>
        <taxon>Shigella</taxon>
    </lineage>
</organism>
<comment type="function">
    <text evidence="1">Required for the timely initiation of chromosomal replication via direct interactions with the DnaA initiator protein.</text>
</comment>
<comment type="subunit">
    <text evidence="1">Homotetramer; dimer of dimers.</text>
</comment>
<comment type="similarity">
    <text evidence="1">Belongs to the SIS family. DiaA subfamily.</text>
</comment>
<sequence>MQERIKACFTESIQTQIAAAEALPDAISRAAMTLVQSLLNGNKILCCGNGTSAANAQHFAASMINRFETERPSLPAIALNTDNVVLTAIANDRLHDEVYAKQVRALGHAGDVLLAISTRGNSRDIVKAVEAAVTRDMTIVALTGYDGGELAGLLGPQDVEIRIPSHRSARIQEMHMLTVNCLCDLIDNTLFPHQDD</sequence>
<feature type="chain" id="PRO_1000137803" description="DnaA initiator-associating protein DiaA">
    <location>
        <begin position="1"/>
        <end position="196"/>
    </location>
</feature>
<feature type="domain" description="SIS" evidence="1">
    <location>
        <begin position="34"/>
        <end position="196"/>
    </location>
</feature>
<gene>
    <name evidence="1" type="primary">diaA</name>
    <name type="ordered locus">SbBS512_E3623</name>
</gene>
<protein>
    <recommendedName>
        <fullName evidence="1">DnaA initiator-associating protein DiaA</fullName>
    </recommendedName>
</protein>
<name>DIAA_SHIB3</name>
<keyword id="KW-0235">DNA replication</keyword>
<keyword id="KW-1185">Reference proteome</keyword>
<evidence type="ECO:0000255" key="1">
    <source>
        <dbReference type="HAMAP-Rule" id="MF_01157"/>
    </source>
</evidence>
<accession>B2U2L8</accession>
<reference key="1">
    <citation type="submission" date="2008-05" db="EMBL/GenBank/DDBJ databases">
        <title>Complete sequence of Shigella boydii serotype 18 strain BS512.</title>
        <authorList>
            <person name="Rasko D.A."/>
            <person name="Rosovitz M."/>
            <person name="Maurelli A.T."/>
            <person name="Myers G."/>
            <person name="Seshadri R."/>
            <person name="Cer R."/>
            <person name="Jiang L."/>
            <person name="Ravel J."/>
            <person name="Sebastian Y."/>
        </authorList>
    </citation>
    <scope>NUCLEOTIDE SEQUENCE [LARGE SCALE GENOMIC DNA]</scope>
    <source>
        <strain>CDC 3083-94 / BS512</strain>
    </source>
</reference>
<dbReference type="EMBL" id="CP001063">
    <property type="protein sequence ID" value="ACD10184.1"/>
    <property type="molecule type" value="Genomic_DNA"/>
</dbReference>
<dbReference type="RefSeq" id="WP_001158034.1">
    <property type="nucleotide sequence ID" value="NC_010658.1"/>
</dbReference>
<dbReference type="SMR" id="B2U2L8"/>
<dbReference type="STRING" id="344609.SbBS512_E3623"/>
<dbReference type="GeneID" id="93778835"/>
<dbReference type="KEGG" id="sbc:SbBS512_E3623"/>
<dbReference type="HOGENOM" id="CLU_080999_3_1_6"/>
<dbReference type="Proteomes" id="UP000001030">
    <property type="component" value="Chromosome"/>
</dbReference>
<dbReference type="GO" id="GO:0097367">
    <property type="term" value="F:carbohydrate derivative binding"/>
    <property type="evidence" value="ECO:0007669"/>
    <property type="project" value="InterPro"/>
</dbReference>
<dbReference type="GO" id="GO:1901135">
    <property type="term" value="P:carbohydrate derivative metabolic process"/>
    <property type="evidence" value="ECO:0007669"/>
    <property type="project" value="InterPro"/>
</dbReference>
<dbReference type="GO" id="GO:0006260">
    <property type="term" value="P:DNA replication"/>
    <property type="evidence" value="ECO:0007669"/>
    <property type="project" value="UniProtKB-UniRule"/>
</dbReference>
<dbReference type="CDD" id="cd05006">
    <property type="entry name" value="SIS_GmhA"/>
    <property type="match status" value="1"/>
</dbReference>
<dbReference type="FunFam" id="3.40.50.10490:FF:000006">
    <property type="entry name" value="DnaA initiator-associating protein DiaA"/>
    <property type="match status" value="1"/>
</dbReference>
<dbReference type="Gene3D" id="3.40.50.10490">
    <property type="entry name" value="Glucose-6-phosphate isomerase like protein, domain 1"/>
    <property type="match status" value="1"/>
</dbReference>
<dbReference type="HAMAP" id="MF_01157">
    <property type="entry name" value="SIS_DiaA"/>
    <property type="match status" value="1"/>
</dbReference>
<dbReference type="InterPro" id="IPR023070">
    <property type="entry name" value="DiaA"/>
</dbReference>
<dbReference type="InterPro" id="IPR035461">
    <property type="entry name" value="GmhA/DiaA"/>
</dbReference>
<dbReference type="InterPro" id="IPR001347">
    <property type="entry name" value="SIS_dom"/>
</dbReference>
<dbReference type="InterPro" id="IPR046348">
    <property type="entry name" value="SIS_dom_sf"/>
</dbReference>
<dbReference type="InterPro" id="IPR050099">
    <property type="entry name" value="SIS_GmhA/DiaA_subfam"/>
</dbReference>
<dbReference type="NCBIfam" id="NF008138">
    <property type="entry name" value="PRK10886.1"/>
    <property type="match status" value="1"/>
</dbReference>
<dbReference type="NCBIfam" id="NF010546">
    <property type="entry name" value="PRK13936.1"/>
    <property type="match status" value="1"/>
</dbReference>
<dbReference type="PANTHER" id="PTHR30390:SF6">
    <property type="entry name" value="DNAA INITIATOR-ASSOCIATING PROTEIN DIAA"/>
    <property type="match status" value="1"/>
</dbReference>
<dbReference type="PANTHER" id="PTHR30390">
    <property type="entry name" value="SEDOHEPTULOSE 7-PHOSPHATE ISOMERASE / DNAA INITIATOR-ASSOCIATING FACTOR FOR REPLICATION INITIATION"/>
    <property type="match status" value="1"/>
</dbReference>
<dbReference type="Pfam" id="PF13580">
    <property type="entry name" value="SIS_2"/>
    <property type="match status" value="1"/>
</dbReference>
<dbReference type="SUPFAM" id="SSF53697">
    <property type="entry name" value="SIS domain"/>
    <property type="match status" value="1"/>
</dbReference>
<dbReference type="PROSITE" id="PS51464">
    <property type="entry name" value="SIS"/>
    <property type="match status" value="1"/>
</dbReference>